<protein>
    <recommendedName>
        <fullName>Ras and Rab interactor 2</fullName>
    </recommendedName>
    <alternativeName>
        <fullName>Ras interaction/interference protein 2</fullName>
    </alternativeName>
</protein>
<gene>
    <name type="primary">Rin2</name>
</gene>
<accession>Q9D684</accession>
<accession>A8Y5L0</accession>
<accession>Q3U6Z8</accession>
<accession>Q3UAK3</accession>
<accession>Q3UC54</accession>
<accession>Q99K06</accession>
<keyword id="KW-0025">Alternative splicing</keyword>
<keyword id="KW-0963">Cytoplasm</keyword>
<keyword id="KW-0254">Endocytosis</keyword>
<keyword id="KW-0343">GTPase activation</keyword>
<keyword id="KW-0597">Phosphoprotein</keyword>
<keyword id="KW-1185">Reference proteome</keyword>
<keyword id="KW-0727">SH2 domain</keyword>
<reference key="1">
    <citation type="journal article" date="2005" name="Science">
        <title>The transcriptional landscape of the mammalian genome.</title>
        <authorList>
            <person name="Carninci P."/>
            <person name="Kasukawa T."/>
            <person name="Katayama S."/>
            <person name="Gough J."/>
            <person name="Frith M.C."/>
            <person name="Maeda N."/>
            <person name="Oyama R."/>
            <person name="Ravasi T."/>
            <person name="Lenhard B."/>
            <person name="Wells C."/>
            <person name="Kodzius R."/>
            <person name="Shimokawa K."/>
            <person name="Bajic V.B."/>
            <person name="Brenner S.E."/>
            <person name="Batalov S."/>
            <person name="Forrest A.R."/>
            <person name="Zavolan M."/>
            <person name="Davis M.J."/>
            <person name="Wilming L.G."/>
            <person name="Aidinis V."/>
            <person name="Allen J.E."/>
            <person name="Ambesi-Impiombato A."/>
            <person name="Apweiler R."/>
            <person name="Aturaliya R.N."/>
            <person name="Bailey T.L."/>
            <person name="Bansal M."/>
            <person name="Baxter L."/>
            <person name="Beisel K.W."/>
            <person name="Bersano T."/>
            <person name="Bono H."/>
            <person name="Chalk A.M."/>
            <person name="Chiu K.P."/>
            <person name="Choudhary V."/>
            <person name="Christoffels A."/>
            <person name="Clutterbuck D.R."/>
            <person name="Crowe M.L."/>
            <person name="Dalla E."/>
            <person name="Dalrymple B.P."/>
            <person name="de Bono B."/>
            <person name="Della Gatta G."/>
            <person name="di Bernardo D."/>
            <person name="Down T."/>
            <person name="Engstrom P."/>
            <person name="Fagiolini M."/>
            <person name="Faulkner G."/>
            <person name="Fletcher C.F."/>
            <person name="Fukushima T."/>
            <person name="Furuno M."/>
            <person name="Futaki S."/>
            <person name="Gariboldi M."/>
            <person name="Georgii-Hemming P."/>
            <person name="Gingeras T.R."/>
            <person name="Gojobori T."/>
            <person name="Green R.E."/>
            <person name="Gustincich S."/>
            <person name="Harbers M."/>
            <person name="Hayashi Y."/>
            <person name="Hensch T.K."/>
            <person name="Hirokawa N."/>
            <person name="Hill D."/>
            <person name="Huminiecki L."/>
            <person name="Iacono M."/>
            <person name="Ikeo K."/>
            <person name="Iwama A."/>
            <person name="Ishikawa T."/>
            <person name="Jakt M."/>
            <person name="Kanapin A."/>
            <person name="Katoh M."/>
            <person name="Kawasawa Y."/>
            <person name="Kelso J."/>
            <person name="Kitamura H."/>
            <person name="Kitano H."/>
            <person name="Kollias G."/>
            <person name="Krishnan S.P."/>
            <person name="Kruger A."/>
            <person name="Kummerfeld S.K."/>
            <person name="Kurochkin I.V."/>
            <person name="Lareau L.F."/>
            <person name="Lazarevic D."/>
            <person name="Lipovich L."/>
            <person name="Liu J."/>
            <person name="Liuni S."/>
            <person name="McWilliam S."/>
            <person name="Madan Babu M."/>
            <person name="Madera M."/>
            <person name="Marchionni L."/>
            <person name="Matsuda H."/>
            <person name="Matsuzawa S."/>
            <person name="Miki H."/>
            <person name="Mignone F."/>
            <person name="Miyake S."/>
            <person name="Morris K."/>
            <person name="Mottagui-Tabar S."/>
            <person name="Mulder N."/>
            <person name="Nakano N."/>
            <person name="Nakauchi H."/>
            <person name="Ng P."/>
            <person name="Nilsson R."/>
            <person name="Nishiguchi S."/>
            <person name="Nishikawa S."/>
            <person name="Nori F."/>
            <person name="Ohara O."/>
            <person name="Okazaki Y."/>
            <person name="Orlando V."/>
            <person name="Pang K.C."/>
            <person name="Pavan W.J."/>
            <person name="Pavesi G."/>
            <person name="Pesole G."/>
            <person name="Petrovsky N."/>
            <person name="Piazza S."/>
            <person name="Reed J."/>
            <person name="Reid J.F."/>
            <person name="Ring B.Z."/>
            <person name="Ringwald M."/>
            <person name="Rost B."/>
            <person name="Ruan Y."/>
            <person name="Salzberg S.L."/>
            <person name="Sandelin A."/>
            <person name="Schneider C."/>
            <person name="Schoenbach C."/>
            <person name="Sekiguchi K."/>
            <person name="Semple C.A."/>
            <person name="Seno S."/>
            <person name="Sessa L."/>
            <person name="Sheng Y."/>
            <person name="Shibata Y."/>
            <person name="Shimada H."/>
            <person name="Shimada K."/>
            <person name="Silva D."/>
            <person name="Sinclair B."/>
            <person name="Sperling S."/>
            <person name="Stupka E."/>
            <person name="Sugiura K."/>
            <person name="Sultana R."/>
            <person name="Takenaka Y."/>
            <person name="Taki K."/>
            <person name="Tammoja K."/>
            <person name="Tan S.L."/>
            <person name="Tang S."/>
            <person name="Taylor M.S."/>
            <person name="Tegner J."/>
            <person name="Teichmann S.A."/>
            <person name="Ueda H.R."/>
            <person name="van Nimwegen E."/>
            <person name="Verardo R."/>
            <person name="Wei C.L."/>
            <person name="Yagi K."/>
            <person name="Yamanishi H."/>
            <person name="Zabarovsky E."/>
            <person name="Zhu S."/>
            <person name="Zimmer A."/>
            <person name="Hide W."/>
            <person name="Bult C."/>
            <person name="Grimmond S.M."/>
            <person name="Teasdale R.D."/>
            <person name="Liu E.T."/>
            <person name="Brusic V."/>
            <person name="Quackenbush J."/>
            <person name="Wahlestedt C."/>
            <person name="Mattick J.S."/>
            <person name="Hume D.A."/>
            <person name="Kai C."/>
            <person name="Sasaki D."/>
            <person name="Tomaru Y."/>
            <person name="Fukuda S."/>
            <person name="Kanamori-Katayama M."/>
            <person name="Suzuki M."/>
            <person name="Aoki J."/>
            <person name="Arakawa T."/>
            <person name="Iida J."/>
            <person name="Imamura K."/>
            <person name="Itoh M."/>
            <person name="Kato T."/>
            <person name="Kawaji H."/>
            <person name="Kawagashira N."/>
            <person name="Kawashima T."/>
            <person name="Kojima M."/>
            <person name="Kondo S."/>
            <person name="Konno H."/>
            <person name="Nakano K."/>
            <person name="Ninomiya N."/>
            <person name="Nishio T."/>
            <person name="Okada M."/>
            <person name="Plessy C."/>
            <person name="Shibata K."/>
            <person name="Shiraki T."/>
            <person name="Suzuki S."/>
            <person name="Tagami M."/>
            <person name="Waki K."/>
            <person name="Watahiki A."/>
            <person name="Okamura-Oho Y."/>
            <person name="Suzuki H."/>
            <person name="Kawai J."/>
            <person name="Hayashizaki Y."/>
        </authorList>
    </citation>
    <scope>NUCLEOTIDE SEQUENCE [LARGE SCALE MRNA] (ISOFORM 2)</scope>
    <scope>NUCLEOTIDE SEQUENCE [LARGE SCALE MRNA] OF 427-903 (ISOFORMS 1/2)</scope>
    <source>
        <strain>C57BL/6J</strain>
        <tissue>Bone marrow macrophage</tissue>
        <tissue>Skin</tissue>
    </source>
</reference>
<reference key="2">
    <citation type="journal article" date="2009" name="PLoS Biol.">
        <title>Lineage-specific biology revealed by a finished genome assembly of the mouse.</title>
        <authorList>
            <person name="Church D.M."/>
            <person name="Goodstadt L."/>
            <person name="Hillier L.W."/>
            <person name="Zody M.C."/>
            <person name="Goldstein S."/>
            <person name="She X."/>
            <person name="Bult C.J."/>
            <person name="Agarwala R."/>
            <person name="Cherry J.L."/>
            <person name="DiCuccio M."/>
            <person name="Hlavina W."/>
            <person name="Kapustin Y."/>
            <person name="Meric P."/>
            <person name="Maglott D."/>
            <person name="Birtle Z."/>
            <person name="Marques A.C."/>
            <person name="Graves T."/>
            <person name="Zhou S."/>
            <person name="Teague B."/>
            <person name="Potamousis K."/>
            <person name="Churas C."/>
            <person name="Place M."/>
            <person name="Herschleb J."/>
            <person name="Runnheim R."/>
            <person name="Forrest D."/>
            <person name="Amos-Landgraf J."/>
            <person name="Schwartz D.C."/>
            <person name="Cheng Z."/>
            <person name="Lindblad-Toh K."/>
            <person name="Eichler E.E."/>
            <person name="Ponting C.P."/>
        </authorList>
    </citation>
    <scope>NUCLEOTIDE SEQUENCE [LARGE SCALE GENOMIC DNA]</scope>
    <source>
        <strain>C57BL/6J</strain>
    </source>
</reference>
<reference key="3">
    <citation type="journal article" date="2004" name="Genome Res.">
        <title>The status, quality, and expansion of the NIH full-length cDNA project: the Mammalian Gene Collection (MGC).</title>
        <authorList>
            <consortium name="The MGC Project Team"/>
        </authorList>
    </citation>
    <scope>NUCLEOTIDE SEQUENCE [LARGE SCALE MRNA] (ISOFORMS 1 AND 2)</scope>
    <source>
        <strain>Czech II</strain>
        <strain>FVB/N</strain>
        <tissue>Mammary gland</tissue>
    </source>
</reference>
<reference key="4">
    <citation type="journal article" date="2009" name="Immunity">
        <title>The phagosomal proteome in interferon-gamma-activated macrophages.</title>
        <authorList>
            <person name="Trost M."/>
            <person name="English L."/>
            <person name="Lemieux S."/>
            <person name="Courcelles M."/>
            <person name="Desjardins M."/>
            <person name="Thibault P."/>
        </authorList>
    </citation>
    <scope>PHOSPHORYLATION [LARGE SCALE ANALYSIS] AT SER-366</scope>
    <scope>IDENTIFICATION BY MASS SPECTROMETRY [LARGE SCALE ANALYSIS]</scope>
</reference>
<reference key="5">
    <citation type="journal article" date="2010" name="Cell">
        <title>A tissue-specific atlas of mouse protein phosphorylation and expression.</title>
        <authorList>
            <person name="Huttlin E.L."/>
            <person name="Jedrychowski M.P."/>
            <person name="Elias J.E."/>
            <person name="Goswami T."/>
            <person name="Rad R."/>
            <person name="Beausoleil S.A."/>
            <person name="Villen J."/>
            <person name="Haas W."/>
            <person name="Sowa M.E."/>
            <person name="Gygi S.P."/>
        </authorList>
    </citation>
    <scope>PHOSPHORYLATION [LARGE SCALE ANALYSIS] AT SER-366 AND SER-510</scope>
    <scope>IDENTIFICATION BY MASS SPECTROMETRY [LARGE SCALE ANALYSIS]</scope>
    <source>
        <tissue>Heart</tissue>
        <tissue>Kidney</tissue>
        <tissue>Lung</tissue>
        <tissue>Spleen</tissue>
    </source>
</reference>
<name>RIN2_MOUSE</name>
<organism>
    <name type="scientific">Mus musculus</name>
    <name type="common">Mouse</name>
    <dbReference type="NCBI Taxonomy" id="10090"/>
    <lineage>
        <taxon>Eukaryota</taxon>
        <taxon>Metazoa</taxon>
        <taxon>Chordata</taxon>
        <taxon>Craniata</taxon>
        <taxon>Vertebrata</taxon>
        <taxon>Euteleostomi</taxon>
        <taxon>Mammalia</taxon>
        <taxon>Eutheria</taxon>
        <taxon>Euarchontoglires</taxon>
        <taxon>Glires</taxon>
        <taxon>Rodentia</taxon>
        <taxon>Myomorpha</taxon>
        <taxon>Muroidea</taxon>
        <taxon>Muridae</taxon>
        <taxon>Murinae</taxon>
        <taxon>Mus</taxon>
        <taxon>Mus</taxon>
    </lineage>
</organism>
<proteinExistence type="evidence at protein level"/>
<dbReference type="EMBL" id="AK014548">
    <property type="protein sequence ID" value="BAB29425.1"/>
    <property type="status" value="ALT_INIT"/>
    <property type="molecule type" value="mRNA"/>
</dbReference>
<dbReference type="EMBL" id="AK040763">
    <property type="protein sequence ID" value="BAC30697.1"/>
    <property type="status" value="ALT_INIT"/>
    <property type="molecule type" value="mRNA"/>
</dbReference>
<dbReference type="EMBL" id="AK150680">
    <property type="protein sequence ID" value="BAE29760.1"/>
    <property type="status" value="ALT_SEQ"/>
    <property type="molecule type" value="mRNA"/>
</dbReference>
<dbReference type="EMBL" id="AK151332">
    <property type="protein sequence ID" value="BAE30311.1"/>
    <property type="status" value="ALT_SEQ"/>
    <property type="molecule type" value="mRNA"/>
</dbReference>
<dbReference type="EMBL" id="AK152893">
    <property type="protein sequence ID" value="BAE31576.1"/>
    <property type="status" value="ALT_SEQ"/>
    <property type="molecule type" value="mRNA"/>
</dbReference>
<dbReference type="EMBL" id="AL672100">
    <property type="status" value="NOT_ANNOTATED_CDS"/>
    <property type="molecule type" value="Genomic_DNA"/>
</dbReference>
<dbReference type="EMBL" id="BC005529">
    <property type="protein sequence ID" value="AAH05529.1"/>
    <property type="status" value="ALT_INIT"/>
    <property type="molecule type" value="mRNA"/>
</dbReference>
<dbReference type="EMBL" id="BC040390">
    <property type="protein sequence ID" value="AAH40390.3"/>
    <property type="status" value="ALT_SEQ"/>
    <property type="molecule type" value="mRNA"/>
</dbReference>
<dbReference type="EMBL" id="BI660407">
    <property type="status" value="NOT_ANNOTATED_CDS"/>
    <property type="molecule type" value="mRNA"/>
</dbReference>
<dbReference type="RefSeq" id="NP_001393437.1">
    <molecule id="Q9D684-1"/>
    <property type="nucleotide sequence ID" value="NM_001406508.1"/>
</dbReference>
<dbReference type="RefSeq" id="NP_001393438.1">
    <molecule id="Q9D684-1"/>
    <property type="nucleotide sequence ID" value="NM_001406509.1"/>
</dbReference>
<dbReference type="RefSeq" id="NP_001393439.1">
    <molecule id="Q9D684-2"/>
    <property type="nucleotide sequence ID" value="NM_001406510.1"/>
</dbReference>
<dbReference type="RefSeq" id="NP_083000.5">
    <property type="nucleotide sequence ID" value="NM_028724.4"/>
</dbReference>
<dbReference type="RefSeq" id="XP_006500332.1">
    <molecule id="Q9D684-1"/>
    <property type="nucleotide sequence ID" value="XM_006500269.1"/>
</dbReference>
<dbReference type="RefSeq" id="XP_006500333.1">
    <property type="nucleotide sequence ID" value="XM_006500270.3"/>
</dbReference>
<dbReference type="RefSeq" id="XP_006500334.1">
    <property type="nucleotide sequence ID" value="XM_006500271.3"/>
</dbReference>
<dbReference type="RefSeq" id="XP_036018518.1">
    <molecule id="Q9D684-2"/>
    <property type="nucleotide sequence ID" value="XM_036162625.1"/>
</dbReference>
<dbReference type="SMR" id="Q9D684"/>
<dbReference type="FunCoup" id="Q9D684">
    <property type="interactions" value="831"/>
</dbReference>
<dbReference type="STRING" id="10090.ENSMUSP00000092053"/>
<dbReference type="iPTMnet" id="Q9D684"/>
<dbReference type="PhosphoSitePlus" id="Q9D684"/>
<dbReference type="PaxDb" id="10090-ENSMUSP00000105632"/>
<dbReference type="ProteomicsDB" id="255275">
    <molecule id="Q9D684-1"/>
</dbReference>
<dbReference type="ProteomicsDB" id="255276">
    <molecule id="Q9D684-2"/>
</dbReference>
<dbReference type="Pumba" id="Q9D684"/>
<dbReference type="Antibodypedia" id="24653">
    <property type="antibodies" value="76 antibodies from 20 providers"/>
</dbReference>
<dbReference type="DNASU" id="74030"/>
<dbReference type="Ensembl" id="ENSMUST00000110005.8">
    <molecule id="Q9D684-1"/>
    <property type="protein sequence ID" value="ENSMUSP00000105632.2"/>
    <property type="gene ID" value="ENSMUSG00000001768.17"/>
</dbReference>
<dbReference type="GeneID" id="74030"/>
<dbReference type="KEGG" id="mmu:74030"/>
<dbReference type="AGR" id="MGI:1921280"/>
<dbReference type="CTD" id="54453"/>
<dbReference type="MGI" id="MGI:1921280">
    <property type="gene designation" value="Rin2"/>
</dbReference>
<dbReference type="VEuPathDB" id="HostDB:ENSMUSG00000001768"/>
<dbReference type="eggNOG" id="KOG2320">
    <property type="taxonomic scope" value="Eukaryota"/>
</dbReference>
<dbReference type="GeneTree" id="ENSGT00940000154866"/>
<dbReference type="InParanoid" id="Q9D684"/>
<dbReference type="OrthoDB" id="21085at2759"/>
<dbReference type="PhylomeDB" id="Q9D684"/>
<dbReference type="TreeFam" id="TF331067"/>
<dbReference type="Reactome" id="R-MMU-8876198">
    <property type="pathway name" value="RAB GEFs exchange GTP for GDP on RABs"/>
</dbReference>
<dbReference type="BioGRID-ORCS" id="74030">
    <property type="hits" value="5 hits in 77 CRISPR screens"/>
</dbReference>
<dbReference type="ChiTaRS" id="Rin2">
    <property type="organism name" value="mouse"/>
</dbReference>
<dbReference type="PRO" id="PR:Q9D684"/>
<dbReference type="Proteomes" id="UP000000589">
    <property type="component" value="Chromosome 2"/>
</dbReference>
<dbReference type="RNAct" id="Q9D684">
    <property type="molecule type" value="protein"/>
</dbReference>
<dbReference type="Bgee" id="ENSMUSG00000001768">
    <property type="expression patterns" value="Expressed in thoracic mammary gland and 248 other cell types or tissues"/>
</dbReference>
<dbReference type="ExpressionAtlas" id="Q9D684">
    <property type="expression patterns" value="baseline and differential"/>
</dbReference>
<dbReference type="GO" id="GO:0005737">
    <property type="term" value="C:cytoplasm"/>
    <property type="evidence" value="ECO:0007669"/>
    <property type="project" value="UniProtKB-SubCell"/>
</dbReference>
<dbReference type="GO" id="GO:0005096">
    <property type="term" value="F:GTPase activator activity"/>
    <property type="evidence" value="ECO:0007669"/>
    <property type="project" value="UniProtKB-KW"/>
</dbReference>
<dbReference type="GO" id="GO:0005085">
    <property type="term" value="F:guanyl-nucleotide exchange factor activity"/>
    <property type="evidence" value="ECO:0007669"/>
    <property type="project" value="InterPro"/>
</dbReference>
<dbReference type="GO" id="GO:0006897">
    <property type="term" value="P:endocytosis"/>
    <property type="evidence" value="ECO:0007669"/>
    <property type="project" value="UniProtKB-KW"/>
</dbReference>
<dbReference type="GO" id="GO:0010595">
    <property type="term" value="P:positive regulation of endothelial cell migration"/>
    <property type="evidence" value="ECO:0007669"/>
    <property type="project" value="Ensembl"/>
</dbReference>
<dbReference type="GO" id="GO:1904906">
    <property type="term" value="P:positive regulation of endothelial cell-matrix adhesion via fibronectin"/>
    <property type="evidence" value="ECO:0007669"/>
    <property type="project" value="Ensembl"/>
</dbReference>
<dbReference type="GO" id="GO:2001214">
    <property type="term" value="P:positive regulation of vasculogenesis"/>
    <property type="evidence" value="ECO:0007669"/>
    <property type="project" value="Ensembl"/>
</dbReference>
<dbReference type="GO" id="GO:0007165">
    <property type="term" value="P:signal transduction"/>
    <property type="evidence" value="ECO:0007669"/>
    <property type="project" value="InterPro"/>
</dbReference>
<dbReference type="CDD" id="cd16131">
    <property type="entry name" value="RA_Rin2"/>
    <property type="match status" value="1"/>
</dbReference>
<dbReference type="CDD" id="cd10394">
    <property type="entry name" value="SH2_RIN2"/>
    <property type="match status" value="1"/>
</dbReference>
<dbReference type="FunFam" id="1.20.1050.80:FF:000002">
    <property type="entry name" value="Ras and Rab interactor 2"/>
    <property type="match status" value="1"/>
</dbReference>
<dbReference type="FunFam" id="3.30.505.10:FF:000052">
    <property type="entry name" value="Ras and Rab interactor 2"/>
    <property type="match status" value="1"/>
</dbReference>
<dbReference type="Gene3D" id="3.30.505.10">
    <property type="entry name" value="SH2 domain"/>
    <property type="match status" value="1"/>
</dbReference>
<dbReference type="Gene3D" id="1.20.1050.80">
    <property type="entry name" value="VPS9 domain"/>
    <property type="match status" value="1"/>
</dbReference>
<dbReference type="InterPro" id="IPR000159">
    <property type="entry name" value="RA_dom"/>
</dbReference>
<dbReference type="InterPro" id="IPR035868">
    <property type="entry name" value="RIN2_SH2"/>
</dbReference>
<dbReference type="InterPro" id="IPR000980">
    <property type="entry name" value="SH2"/>
</dbReference>
<dbReference type="InterPro" id="IPR036860">
    <property type="entry name" value="SH2_dom_sf"/>
</dbReference>
<dbReference type="InterPro" id="IPR029071">
    <property type="entry name" value="Ubiquitin-like_domsf"/>
</dbReference>
<dbReference type="InterPro" id="IPR003123">
    <property type="entry name" value="VPS9"/>
</dbReference>
<dbReference type="InterPro" id="IPR045046">
    <property type="entry name" value="Vps9-like"/>
</dbReference>
<dbReference type="InterPro" id="IPR037191">
    <property type="entry name" value="VPS9_dom_sf"/>
</dbReference>
<dbReference type="PANTHER" id="PTHR23101">
    <property type="entry name" value="RAB GDP/GTP EXCHANGE FACTOR"/>
    <property type="match status" value="1"/>
</dbReference>
<dbReference type="PANTHER" id="PTHR23101:SF51">
    <property type="entry name" value="RAS AND RAB INTERACTOR 2"/>
    <property type="match status" value="1"/>
</dbReference>
<dbReference type="Pfam" id="PF00788">
    <property type="entry name" value="RA"/>
    <property type="match status" value="1"/>
</dbReference>
<dbReference type="Pfam" id="PF23268">
    <property type="entry name" value="RIN1"/>
    <property type="match status" value="1"/>
</dbReference>
<dbReference type="Pfam" id="PF02204">
    <property type="entry name" value="VPS9"/>
    <property type="match status" value="1"/>
</dbReference>
<dbReference type="SMART" id="SM00314">
    <property type="entry name" value="RA"/>
    <property type="match status" value="1"/>
</dbReference>
<dbReference type="SMART" id="SM00252">
    <property type="entry name" value="SH2"/>
    <property type="match status" value="1"/>
</dbReference>
<dbReference type="SMART" id="SM00167">
    <property type="entry name" value="VPS9"/>
    <property type="match status" value="1"/>
</dbReference>
<dbReference type="SUPFAM" id="SSF55550">
    <property type="entry name" value="SH2 domain"/>
    <property type="match status" value="1"/>
</dbReference>
<dbReference type="SUPFAM" id="SSF54236">
    <property type="entry name" value="Ubiquitin-like"/>
    <property type="match status" value="1"/>
</dbReference>
<dbReference type="SUPFAM" id="SSF109993">
    <property type="entry name" value="VPS9 domain"/>
    <property type="match status" value="1"/>
</dbReference>
<dbReference type="PROSITE" id="PS50200">
    <property type="entry name" value="RA"/>
    <property type="match status" value="1"/>
</dbReference>
<dbReference type="PROSITE" id="PS50001">
    <property type="entry name" value="SH2"/>
    <property type="match status" value="1"/>
</dbReference>
<dbReference type="PROSITE" id="PS51205">
    <property type="entry name" value="VPS9"/>
    <property type="match status" value="1"/>
</dbReference>
<sequence length="903" mass="101559">MSAWTMGAQGLDKRGSFFKLIDTIASEIGELKREMVQTDISRENGLEPSETHSMVRHKDGGYSEDKDGKTCPRDSGYDSLSNRLSILDRLLHTHPIWLQLSLSEEEAAEVLQAQPPGIFLVRKSSKMQKKVLSLRLPCEFGAPLKEFTIKESTYTFSLEGSGISFADLFRLIAFYCISRDVLPFTLKLPYAISTAKTESQLEELAQLGLNFWSSSADNKPLNSPPPHRPLPSAGICPASLRQLCLINGVHSIKTRTPSELECSQTNGALCFINPLFLKVHSQDLSTGPKRPSTRTPNANGTERPRSPPPRPPPPAINSLHTSPGLSRTEPQTSMPETVNHSKHGNVALLGTKPTPIPPPRLKKQASFLEAESSAKTLTARRPSRRSEPEPELELELEMGTAGHAGGAPPRDAPGDCTRAPPPGSESQPPPCHGARQRLSDMSLSTSSSDSLEFDRSMPLYGYEADTTSSLEDYEGESDQETMAPPIKSKKKRNSSFVLPKLVKSQLRKMSGVFSSFMTPEKRMVRRIAELSRDKCTYFGCLVQDYVSFLKENKECHVSSTDMLQTIRQFMTQVKNYLSQSSELDPPIESLIPEDQIDVVLEKAMHKCILKPLKGHVEAMLKDFHTADGSWKQLKENLQLVRQRNPQELGVFAPTPDLMELEKIKLKFMTMQKMYSPEKKVMLLLRVCKLIYTVMENNSGRMYGADDFLPVLTYVIAQCDMLELDTEIEYMMELLDPSLLHGEGGYYLTSAYGALSLIKNFQEEQAARLLSSEARDTLRQWHKRRTTNRTIPSVDDFQNYLRVAFQEVNSGCTGKTLLVRPYITTEDVCQLCAEKFKVEDPEEYSLFLFVDETWQQLAEDTYPQKIKAELHSRPQPHIFHFVYKRIKSDPYGVIFQNGEDLTPS</sequence>
<feature type="chain" id="PRO_0000191321" description="Ras and Rab interactor 2">
    <location>
        <begin position="1"/>
        <end position="903"/>
    </location>
</feature>
<feature type="domain" description="SH2" evidence="4">
    <location>
        <begin position="97"/>
        <end position="190"/>
    </location>
</feature>
<feature type="domain" description="VPS9" evidence="5">
    <location>
        <begin position="627"/>
        <end position="766"/>
    </location>
</feature>
<feature type="domain" description="Ras-associating" evidence="3">
    <location>
        <begin position="796"/>
        <end position="887"/>
    </location>
</feature>
<feature type="region of interest" description="Disordered" evidence="6">
    <location>
        <begin position="44"/>
        <end position="73"/>
    </location>
</feature>
<feature type="region of interest" description="Disordered" evidence="6">
    <location>
        <begin position="282"/>
        <end position="455"/>
    </location>
</feature>
<feature type="region of interest" description="Disordered" evidence="6">
    <location>
        <begin position="471"/>
        <end position="491"/>
    </location>
</feature>
<feature type="region of interest" description="Interaction with RAB5B" evidence="1">
    <location>
        <begin position="506"/>
        <end position="775"/>
    </location>
</feature>
<feature type="compositionally biased region" description="Basic and acidic residues" evidence="6">
    <location>
        <begin position="56"/>
        <end position="73"/>
    </location>
</feature>
<feature type="compositionally biased region" description="Pro residues" evidence="6">
    <location>
        <begin position="306"/>
        <end position="315"/>
    </location>
</feature>
<feature type="compositionally biased region" description="Polar residues" evidence="6">
    <location>
        <begin position="318"/>
        <end position="338"/>
    </location>
</feature>
<feature type="compositionally biased region" description="Pro residues" evidence="6">
    <location>
        <begin position="419"/>
        <end position="431"/>
    </location>
</feature>
<feature type="compositionally biased region" description="Low complexity" evidence="6">
    <location>
        <begin position="439"/>
        <end position="450"/>
    </location>
</feature>
<feature type="modified residue" description="Phosphoserine" evidence="10 11">
    <location>
        <position position="366"/>
    </location>
</feature>
<feature type="modified residue" description="Phosphoserine" evidence="11">
    <location>
        <position position="510"/>
    </location>
</feature>
<feature type="modified residue" description="Phosphothreonine" evidence="2">
    <location>
        <position position="518"/>
    </location>
</feature>
<feature type="splice variant" id="VSP_007581" description="In isoform 2." evidence="7 8">
    <location>
        <begin position="1"/>
        <end position="53"/>
    </location>
</feature>
<feature type="sequence conflict" description="In Ref. 1; BAE29760." evidence="9" ref="1">
    <original>D</original>
    <variation>G</variation>
    <location>
        <position position="180"/>
    </location>
</feature>
<feature type="sequence conflict" description="In Ref. 1; BAE29760/BAE31576." evidence="9" ref="1">
    <original>L</original>
    <variation>I</variation>
    <location>
        <position position="204"/>
    </location>
</feature>
<feature type="sequence conflict" description="In Ref. 3; AAH40390." evidence="9" ref="3">
    <original>L</original>
    <variation>P</variation>
    <location>
        <position position="221"/>
    </location>
</feature>
<feature type="sequence conflict" description="In Ref. 3; AAH40390." evidence="9" ref="3">
    <original>R</original>
    <variation>S</variation>
    <location>
        <position position="385"/>
    </location>
</feature>
<feature type="sequence conflict" description="In Ref. 1; BAB29425." evidence="9" ref="1">
    <original>S</original>
    <variation>Y</variation>
    <location>
        <position position="448"/>
    </location>
</feature>
<feature type="sequence conflict" description="In Ref. 1; BAB29425." evidence="9" ref="1">
    <original>K</original>
    <variation>R</variation>
    <location>
        <position position="491"/>
    </location>
</feature>
<feature type="sequence conflict" description="In Ref. 1; BAE30311." evidence="9" ref="1">
    <original>M</original>
    <variation>V</variation>
    <location>
        <position position="694"/>
    </location>
</feature>
<feature type="sequence conflict" description="In Ref. 1; BAE29760." evidence="9" ref="1">
    <original>Y</original>
    <variation>C</variation>
    <location>
        <position position="729"/>
    </location>
</feature>
<feature type="sequence conflict" description="In Ref. 1; BAE30311." evidence="9" ref="1">
    <original>T</original>
    <variation>A</variation>
    <location>
        <position position="748"/>
    </location>
</feature>
<feature type="sequence conflict" description="In Ref. 1; BAC30697." evidence="9" ref="1">
    <original>R</original>
    <variation>Q</variation>
    <location>
        <position position="801"/>
    </location>
</feature>
<evidence type="ECO:0000250" key="1"/>
<evidence type="ECO:0000250" key="2">
    <source>
        <dbReference type="UniProtKB" id="Q8WYP3"/>
    </source>
</evidence>
<evidence type="ECO:0000255" key="3">
    <source>
        <dbReference type="PROSITE-ProRule" id="PRU00166"/>
    </source>
</evidence>
<evidence type="ECO:0000255" key="4">
    <source>
        <dbReference type="PROSITE-ProRule" id="PRU00191"/>
    </source>
</evidence>
<evidence type="ECO:0000255" key="5">
    <source>
        <dbReference type="PROSITE-ProRule" id="PRU00550"/>
    </source>
</evidence>
<evidence type="ECO:0000256" key="6">
    <source>
        <dbReference type="SAM" id="MobiDB-lite"/>
    </source>
</evidence>
<evidence type="ECO:0000303" key="7">
    <source>
    </source>
</evidence>
<evidence type="ECO:0000303" key="8">
    <source>
    </source>
</evidence>
<evidence type="ECO:0000305" key="9"/>
<evidence type="ECO:0007744" key="10">
    <source>
    </source>
</evidence>
<evidence type="ECO:0007744" key="11">
    <source>
    </source>
</evidence>
<comment type="function">
    <text evidence="1">Ras effector protein. May function as an upstream activator and/or downstream effector for RAB5B in endocytic pathway. May function as a guanine nucleotide exchange (GEF) of RAB5B, required for activating the RAB5 proteins by exchanging bound GDP for free GTP (By similarity).</text>
</comment>
<comment type="subunit">
    <text evidence="1">Homotetramer; probably composed of anti-parallel linkage of two parallel dimers. Interacts with Ras. Interacts with RAB5B, with a much higher affinity for GTP-bound activated RAB5B. Does not interact with other members of the Rab family (By similarity).</text>
</comment>
<comment type="subcellular location">
    <subcellularLocation>
        <location evidence="1">Cytoplasm</location>
    </subcellularLocation>
</comment>
<comment type="alternative products">
    <event type="alternative splicing"/>
    <isoform>
        <id>Q9D684-1</id>
        <name>1</name>
        <sequence type="displayed"/>
    </isoform>
    <isoform>
        <id>Q9D684-2</id>
        <name>2</name>
        <sequence type="described" ref="VSP_007581"/>
    </isoform>
</comment>
<comment type="similarity">
    <text evidence="9">Belongs to the RIN (Ras interaction/interference) family.</text>
</comment>
<comment type="sequence caution" evidence="9">
    <conflict type="erroneous initiation">
        <sequence resource="EMBL-CDS" id="AAH05529"/>
    </conflict>
</comment>
<comment type="sequence caution" evidence="9">
    <conflict type="miscellaneous discrepancy">
        <sequence resource="EMBL-CDS" id="AAH40390"/>
    </conflict>
    <text>Contaminating sequence. Sequence of unknown origin in the N-terminal part.</text>
</comment>
<comment type="sequence caution" evidence="9">
    <conflict type="erroneous initiation">
        <sequence resource="EMBL-CDS" id="BAB29425"/>
    </conflict>
</comment>
<comment type="sequence caution" evidence="9">
    <conflict type="erroneous initiation">
        <sequence resource="EMBL-CDS" id="BAC30697"/>
    </conflict>
</comment>
<comment type="sequence caution" evidence="9">
    <conflict type="miscellaneous discrepancy">
        <sequence resource="EMBL-CDS" id="BAE29760"/>
    </conflict>
    <text>Contaminating sequence. Sequence of unknown origin in the N-terminal part.</text>
</comment>
<comment type="sequence caution" evidence="9">
    <conflict type="miscellaneous discrepancy">
        <sequence resource="EMBL-CDS" id="BAE30311"/>
    </conflict>
    <text>Contaminating sequence. Sequence of unknown origin in the N-terminal part.</text>
</comment>
<comment type="sequence caution" evidence="9">
    <conflict type="miscellaneous discrepancy">
        <sequence resource="EMBL-CDS" id="BAE31576"/>
    </conflict>
    <text>Contaminating sequence. Sequence of unknown origin in the N-terminal part.</text>
</comment>